<proteinExistence type="inferred from homology"/>
<feature type="chain" id="PRO_0000128903" description="4-hydroxy-3-methylbut-2-enyl diphosphate reductase">
    <location>
        <begin position="1"/>
        <end position="317"/>
    </location>
</feature>
<feature type="active site" description="Proton donor" evidence="1">
    <location>
        <position position="127"/>
    </location>
</feature>
<feature type="binding site" evidence="1">
    <location>
        <position position="12"/>
    </location>
    <ligand>
        <name>[4Fe-4S] cluster</name>
        <dbReference type="ChEBI" id="CHEBI:49883"/>
    </ligand>
</feature>
<feature type="binding site" evidence="1">
    <location>
        <position position="41"/>
    </location>
    <ligand>
        <name>(2E)-4-hydroxy-3-methylbut-2-enyl diphosphate</name>
        <dbReference type="ChEBI" id="CHEBI:128753"/>
    </ligand>
</feature>
<feature type="binding site" evidence="1">
    <location>
        <position position="41"/>
    </location>
    <ligand>
        <name>dimethylallyl diphosphate</name>
        <dbReference type="ChEBI" id="CHEBI:57623"/>
    </ligand>
</feature>
<feature type="binding site" evidence="1">
    <location>
        <position position="41"/>
    </location>
    <ligand>
        <name>isopentenyl diphosphate</name>
        <dbReference type="ChEBI" id="CHEBI:128769"/>
    </ligand>
</feature>
<feature type="binding site" evidence="1">
    <location>
        <position position="74"/>
    </location>
    <ligand>
        <name>(2E)-4-hydroxy-3-methylbut-2-enyl diphosphate</name>
        <dbReference type="ChEBI" id="CHEBI:128753"/>
    </ligand>
</feature>
<feature type="binding site" evidence="1">
    <location>
        <position position="74"/>
    </location>
    <ligand>
        <name>dimethylallyl diphosphate</name>
        <dbReference type="ChEBI" id="CHEBI:57623"/>
    </ligand>
</feature>
<feature type="binding site" evidence="1">
    <location>
        <position position="74"/>
    </location>
    <ligand>
        <name>isopentenyl diphosphate</name>
        <dbReference type="ChEBI" id="CHEBI:128769"/>
    </ligand>
</feature>
<feature type="binding site" evidence="1">
    <location>
        <position position="97"/>
    </location>
    <ligand>
        <name>[4Fe-4S] cluster</name>
        <dbReference type="ChEBI" id="CHEBI:49883"/>
    </ligand>
</feature>
<feature type="binding site" evidence="1">
    <location>
        <position position="125"/>
    </location>
    <ligand>
        <name>(2E)-4-hydroxy-3-methylbut-2-enyl diphosphate</name>
        <dbReference type="ChEBI" id="CHEBI:128753"/>
    </ligand>
</feature>
<feature type="binding site" evidence="1">
    <location>
        <position position="125"/>
    </location>
    <ligand>
        <name>dimethylallyl diphosphate</name>
        <dbReference type="ChEBI" id="CHEBI:57623"/>
    </ligand>
</feature>
<feature type="binding site" evidence="1">
    <location>
        <position position="125"/>
    </location>
    <ligand>
        <name>isopentenyl diphosphate</name>
        <dbReference type="ChEBI" id="CHEBI:128769"/>
    </ligand>
</feature>
<feature type="binding site" evidence="1">
    <location>
        <position position="168"/>
    </location>
    <ligand>
        <name>(2E)-4-hydroxy-3-methylbut-2-enyl diphosphate</name>
        <dbReference type="ChEBI" id="CHEBI:128753"/>
    </ligand>
</feature>
<feature type="binding site" evidence="1">
    <location>
        <position position="198"/>
    </location>
    <ligand>
        <name>[4Fe-4S] cluster</name>
        <dbReference type="ChEBI" id="CHEBI:49883"/>
    </ligand>
</feature>
<feature type="binding site" evidence="1">
    <location>
        <position position="226"/>
    </location>
    <ligand>
        <name>(2E)-4-hydroxy-3-methylbut-2-enyl diphosphate</name>
        <dbReference type="ChEBI" id="CHEBI:128753"/>
    </ligand>
</feature>
<feature type="binding site" evidence="1">
    <location>
        <position position="226"/>
    </location>
    <ligand>
        <name>dimethylallyl diphosphate</name>
        <dbReference type="ChEBI" id="CHEBI:57623"/>
    </ligand>
</feature>
<feature type="binding site" evidence="1">
    <location>
        <position position="226"/>
    </location>
    <ligand>
        <name>isopentenyl diphosphate</name>
        <dbReference type="ChEBI" id="CHEBI:128769"/>
    </ligand>
</feature>
<feature type="binding site" evidence="1">
    <location>
        <position position="227"/>
    </location>
    <ligand>
        <name>(2E)-4-hydroxy-3-methylbut-2-enyl diphosphate</name>
        <dbReference type="ChEBI" id="CHEBI:128753"/>
    </ligand>
</feature>
<feature type="binding site" evidence="1">
    <location>
        <position position="227"/>
    </location>
    <ligand>
        <name>dimethylallyl diphosphate</name>
        <dbReference type="ChEBI" id="CHEBI:57623"/>
    </ligand>
</feature>
<feature type="binding site" evidence="1">
    <location>
        <position position="227"/>
    </location>
    <ligand>
        <name>isopentenyl diphosphate</name>
        <dbReference type="ChEBI" id="CHEBI:128769"/>
    </ligand>
</feature>
<feature type="binding site" evidence="1">
    <location>
        <position position="228"/>
    </location>
    <ligand>
        <name>(2E)-4-hydroxy-3-methylbut-2-enyl diphosphate</name>
        <dbReference type="ChEBI" id="CHEBI:128753"/>
    </ligand>
</feature>
<feature type="binding site" evidence="1">
    <location>
        <position position="228"/>
    </location>
    <ligand>
        <name>dimethylallyl diphosphate</name>
        <dbReference type="ChEBI" id="CHEBI:57623"/>
    </ligand>
</feature>
<feature type="binding site" evidence="1">
    <location>
        <position position="228"/>
    </location>
    <ligand>
        <name>isopentenyl diphosphate</name>
        <dbReference type="ChEBI" id="CHEBI:128769"/>
    </ligand>
</feature>
<feature type="binding site" evidence="1">
    <location>
        <position position="270"/>
    </location>
    <ligand>
        <name>(2E)-4-hydroxy-3-methylbut-2-enyl diphosphate</name>
        <dbReference type="ChEBI" id="CHEBI:128753"/>
    </ligand>
</feature>
<feature type="binding site" evidence="1">
    <location>
        <position position="270"/>
    </location>
    <ligand>
        <name>dimethylallyl diphosphate</name>
        <dbReference type="ChEBI" id="CHEBI:57623"/>
    </ligand>
</feature>
<feature type="binding site" evidence="1">
    <location>
        <position position="270"/>
    </location>
    <ligand>
        <name>isopentenyl diphosphate</name>
        <dbReference type="ChEBI" id="CHEBI:128769"/>
    </ligand>
</feature>
<evidence type="ECO:0000255" key="1">
    <source>
        <dbReference type="HAMAP-Rule" id="MF_00191"/>
    </source>
</evidence>
<evidence type="ECO:0000305" key="2"/>
<accession>P58680</accession>
<accession>Q0WJI8</accession>
<gene>
    <name evidence="1" type="primary">ispH</name>
    <name type="synonym">lytB</name>
    <name type="ordered locus">YPO0477</name>
    <name type="ordered locus">y3697</name>
    <name type="ordered locus">YP_3702</name>
</gene>
<name>ISPH_YERPE</name>
<dbReference type="EC" id="1.17.7.4" evidence="1"/>
<dbReference type="EMBL" id="AL590842">
    <property type="protein sequence ID" value="CAL19157.1"/>
    <property type="molecule type" value="Genomic_DNA"/>
</dbReference>
<dbReference type="EMBL" id="AE009952">
    <property type="protein sequence ID" value="AAM87245.1"/>
    <property type="status" value="ALT_INIT"/>
    <property type="molecule type" value="Genomic_DNA"/>
</dbReference>
<dbReference type="EMBL" id="AE017042">
    <property type="protein sequence ID" value="AAS63850.1"/>
    <property type="status" value="ALT_INIT"/>
    <property type="molecule type" value="Genomic_DNA"/>
</dbReference>
<dbReference type="PIR" id="AC0059">
    <property type="entry name" value="AC0059"/>
</dbReference>
<dbReference type="RefSeq" id="WP_002210506.1">
    <property type="nucleotide sequence ID" value="NZ_WUCM01000002.1"/>
</dbReference>
<dbReference type="RefSeq" id="YP_002345550.1">
    <property type="nucleotide sequence ID" value="NC_003143.1"/>
</dbReference>
<dbReference type="SMR" id="P58680"/>
<dbReference type="IntAct" id="P58680">
    <property type="interactions" value="4"/>
</dbReference>
<dbReference type="STRING" id="214092.YPO0477"/>
<dbReference type="PaxDb" id="214092-YPO0477"/>
<dbReference type="EnsemblBacteria" id="AAS63850">
    <property type="protein sequence ID" value="AAS63850"/>
    <property type="gene ID" value="YP_3702"/>
</dbReference>
<dbReference type="GeneID" id="57974132"/>
<dbReference type="KEGG" id="ype:YPO0477"/>
<dbReference type="KEGG" id="ypk:y3697"/>
<dbReference type="KEGG" id="ypm:YP_3702"/>
<dbReference type="PATRIC" id="fig|214092.21.peg.725"/>
<dbReference type="eggNOG" id="COG0761">
    <property type="taxonomic scope" value="Bacteria"/>
</dbReference>
<dbReference type="HOGENOM" id="CLU_027486_1_0_6"/>
<dbReference type="OMA" id="SEMIHNP"/>
<dbReference type="OrthoDB" id="9804068at2"/>
<dbReference type="UniPathway" id="UPA00056">
    <property type="reaction ID" value="UER00097"/>
</dbReference>
<dbReference type="UniPathway" id="UPA00059">
    <property type="reaction ID" value="UER00105"/>
</dbReference>
<dbReference type="Proteomes" id="UP000000815">
    <property type="component" value="Chromosome"/>
</dbReference>
<dbReference type="Proteomes" id="UP000001019">
    <property type="component" value="Chromosome"/>
</dbReference>
<dbReference type="Proteomes" id="UP000002490">
    <property type="component" value="Chromosome"/>
</dbReference>
<dbReference type="GO" id="GO:0005829">
    <property type="term" value="C:cytosol"/>
    <property type="evidence" value="ECO:0000318"/>
    <property type="project" value="GO_Central"/>
</dbReference>
<dbReference type="GO" id="GO:0051539">
    <property type="term" value="F:4 iron, 4 sulfur cluster binding"/>
    <property type="evidence" value="ECO:0007669"/>
    <property type="project" value="UniProtKB-UniRule"/>
</dbReference>
<dbReference type="GO" id="GO:0051745">
    <property type="term" value="F:4-hydroxy-3-methylbut-2-enyl diphosphate reductase activity"/>
    <property type="evidence" value="ECO:0000318"/>
    <property type="project" value="GO_Central"/>
</dbReference>
<dbReference type="GO" id="GO:0046872">
    <property type="term" value="F:metal ion binding"/>
    <property type="evidence" value="ECO:0007669"/>
    <property type="project" value="UniProtKB-KW"/>
</dbReference>
<dbReference type="GO" id="GO:0050992">
    <property type="term" value="P:dimethylallyl diphosphate biosynthetic process"/>
    <property type="evidence" value="ECO:0007669"/>
    <property type="project" value="UniProtKB-UniRule"/>
</dbReference>
<dbReference type="GO" id="GO:0019288">
    <property type="term" value="P:isopentenyl diphosphate biosynthetic process, methylerythritol 4-phosphate pathway"/>
    <property type="evidence" value="ECO:0000318"/>
    <property type="project" value="GO_Central"/>
</dbReference>
<dbReference type="GO" id="GO:0016114">
    <property type="term" value="P:terpenoid biosynthetic process"/>
    <property type="evidence" value="ECO:0007669"/>
    <property type="project" value="UniProtKB-UniRule"/>
</dbReference>
<dbReference type="CDD" id="cd13944">
    <property type="entry name" value="lytB_ispH"/>
    <property type="match status" value="1"/>
</dbReference>
<dbReference type="FunFam" id="3.40.50.11270:FF:000001">
    <property type="entry name" value="4-hydroxy-3-methylbut-2-enyl diphosphate reductase"/>
    <property type="match status" value="1"/>
</dbReference>
<dbReference type="Gene3D" id="3.40.50.11270">
    <property type="match status" value="1"/>
</dbReference>
<dbReference type="Gene3D" id="3.40.1010.20">
    <property type="entry name" value="4-hydroxy-3-methylbut-2-enyl diphosphate reductase, catalytic domain"/>
    <property type="match status" value="2"/>
</dbReference>
<dbReference type="HAMAP" id="MF_00191">
    <property type="entry name" value="IspH"/>
    <property type="match status" value="1"/>
</dbReference>
<dbReference type="InterPro" id="IPR003451">
    <property type="entry name" value="LytB/IspH"/>
</dbReference>
<dbReference type="NCBIfam" id="TIGR00216">
    <property type="entry name" value="ispH_lytB"/>
    <property type="match status" value="1"/>
</dbReference>
<dbReference type="NCBIfam" id="NF002188">
    <property type="entry name" value="PRK01045.1-2"/>
    <property type="match status" value="1"/>
</dbReference>
<dbReference type="NCBIfam" id="NF002190">
    <property type="entry name" value="PRK01045.1-4"/>
    <property type="match status" value="1"/>
</dbReference>
<dbReference type="PANTHER" id="PTHR30426">
    <property type="entry name" value="4-HYDROXY-3-METHYLBUT-2-ENYL DIPHOSPHATE REDUCTASE"/>
    <property type="match status" value="1"/>
</dbReference>
<dbReference type="PANTHER" id="PTHR30426:SF0">
    <property type="entry name" value="4-HYDROXY-3-METHYLBUT-2-ENYL DIPHOSPHATE REDUCTASE"/>
    <property type="match status" value="1"/>
</dbReference>
<dbReference type="Pfam" id="PF02401">
    <property type="entry name" value="LYTB"/>
    <property type="match status" value="1"/>
</dbReference>
<sequence length="317" mass="34709">MQILLANPRGFCAGVDRAISIVERAIEMYGAPIYVRHEVVHNRYVVESLCERGAIFIEEISEVPDGSILIFSAHGVSQAVRAEARSRNLTMLFDATCPLVTKVHMEVARASRKGKEAILIGHAGHPEVEGTMGQYSNPNGGMYLVESPDDVWQLNVKDENNLCFMTQTTLSVDDTSAVIDALNTRFPKIVGPRKDDICYATTNRQEAVRNLANDADIVLVVGSKNSSNSNRLAELVQRMGKPAYLIDSAADIQEFWLQGAKCIGVTAGASAPDILVQQVIARLKDLGAGESIELSGREENIVFEVPKELRVEVKQID</sequence>
<reference key="1">
    <citation type="journal article" date="2001" name="Nature">
        <title>Genome sequence of Yersinia pestis, the causative agent of plague.</title>
        <authorList>
            <person name="Parkhill J."/>
            <person name="Wren B.W."/>
            <person name="Thomson N.R."/>
            <person name="Titball R.W."/>
            <person name="Holden M.T.G."/>
            <person name="Prentice M.B."/>
            <person name="Sebaihia M."/>
            <person name="James K.D."/>
            <person name="Churcher C.M."/>
            <person name="Mungall K.L."/>
            <person name="Baker S."/>
            <person name="Basham D."/>
            <person name="Bentley S.D."/>
            <person name="Brooks K."/>
            <person name="Cerdeno-Tarraga A.-M."/>
            <person name="Chillingworth T."/>
            <person name="Cronin A."/>
            <person name="Davies R.M."/>
            <person name="Davis P."/>
            <person name="Dougan G."/>
            <person name="Feltwell T."/>
            <person name="Hamlin N."/>
            <person name="Holroyd S."/>
            <person name="Jagels K."/>
            <person name="Karlyshev A.V."/>
            <person name="Leather S."/>
            <person name="Moule S."/>
            <person name="Oyston P.C.F."/>
            <person name="Quail M.A."/>
            <person name="Rutherford K.M."/>
            <person name="Simmonds M."/>
            <person name="Skelton J."/>
            <person name="Stevens K."/>
            <person name="Whitehead S."/>
            <person name="Barrell B.G."/>
        </authorList>
    </citation>
    <scope>NUCLEOTIDE SEQUENCE [LARGE SCALE GENOMIC DNA]</scope>
    <source>
        <strain>CO-92 / Biovar Orientalis</strain>
    </source>
</reference>
<reference key="2">
    <citation type="journal article" date="2002" name="J. Bacteriol.">
        <title>Genome sequence of Yersinia pestis KIM.</title>
        <authorList>
            <person name="Deng W."/>
            <person name="Burland V."/>
            <person name="Plunkett G. III"/>
            <person name="Boutin A."/>
            <person name="Mayhew G.F."/>
            <person name="Liss P."/>
            <person name="Perna N.T."/>
            <person name="Rose D.J."/>
            <person name="Mau B."/>
            <person name="Zhou S."/>
            <person name="Schwartz D.C."/>
            <person name="Fetherston J.D."/>
            <person name="Lindler L.E."/>
            <person name="Brubaker R.R."/>
            <person name="Plano G.V."/>
            <person name="Straley S.C."/>
            <person name="McDonough K.A."/>
            <person name="Nilles M.L."/>
            <person name="Matson J.S."/>
            <person name="Blattner F.R."/>
            <person name="Perry R.D."/>
        </authorList>
    </citation>
    <scope>NUCLEOTIDE SEQUENCE [LARGE SCALE GENOMIC DNA]</scope>
    <source>
        <strain>KIM10+ / Biovar Mediaevalis</strain>
    </source>
</reference>
<reference key="3">
    <citation type="journal article" date="2004" name="DNA Res.">
        <title>Complete genome sequence of Yersinia pestis strain 91001, an isolate avirulent to humans.</title>
        <authorList>
            <person name="Song Y."/>
            <person name="Tong Z."/>
            <person name="Wang J."/>
            <person name="Wang L."/>
            <person name="Guo Z."/>
            <person name="Han Y."/>
            <person name="Zhang J."/>
            <person name="Pei D."/>
            <person name="Zhou D."/>
            <person name="Qin H."/>
            <person name="Pang X."/>
            <person name="Han Y."/>
            <person name="Zhai J."/>
            <person name="Li M."/>
            <person name="Cui B."/>
            <person name="Qi Z."/>
            <person name="Jin L."/>
            <person name="Dai R."/>
            <person name="Chen F."/>
            <person name="Li S."/>
            <person name="Ye C."/>
            <person name="Du Z."/>
            <person name="Lin W."/>
            <person name="Wang J."/>
            <person name="Yu J."/>
            <person name="Yang H."/>
            <person name="Wang J."/>
            <person name="Huang P."/>
            <person name="Yang R."/>
        </authorList>
    </citation>
    <scope>NUCLEOTIDE SEQUENCE [LARGE SCALE GENOMIC DNA]</scope>
    <source>
        <strain>91001 / Biovar Mediaevalis</strain>
    </source>
</reference>
<comment type="function">
    <text evidence="1">Catalyzes the conversion of 1-hydroxy-2-methyl-2-(E)-butenyl 4-diphosphate (HMBPP) into a mixture of isopentenyl diphosphate (IPP) and dimethylallyl diphosphate (DMAPP). Acts in the terminal step of the DOXP/MEP pathway for isoprenoid precursor biosynthesis.</text>
</comment>
<comment type="catalytic activity">
    <reaction evidence="1">
        <text>isopentenyl diphosphate + 2 oxidized [2Fe-2S]-[ferredoxin] + H2O = (2E)-4-hydroxy-3-methylbut-2-enyl diphosphate + 2 reduced [2Fe-2S]-[ferredoxin] + 2 H(+)</text>
        <dbReference type="Rhea" id="RHEA:24488"/>
        <dbReference type="Rhea" id="RHEA-COMP:10000"/>
        <dbReference type="Rhea" id="RHEA-COMP:10001"/>
        <dbReference type="ChEBI" id="CHEBI:15377"/>
        <dbReference type="ChEBI" id="CHEBI:15378"/>
        <dbReference type="ChEBI" id="CHEBI:33737"/>
        <dbReference type="ChEBI" id="CHEBI:33738"/>
        <dbReference type="ChEBI" id="CHEBI:128753"/>
        <dbReference type="ChEBI" id="CHEBI:128769"/>
        <dbReference type="EC" id="1.17.7.4"/>
    </reaction>
</comment>
<comment type="catalytic activity">
    <reaction evidence="1">
        <text>dimethylallyl diphosphate + 2 oxidized [2Fe-2S]-[ferredoxin] + H2O = (2E)-4-hydroxy-3-methylbut-2-enyl diphosphate + 2 reduced [2Fe-2S]-[ferredoxin] + 2 H(+)</text>
        <dbReference type="Rhea" id="RHEA:24825"/>
        <dbReference type="Rhea" id="RHEA-COMP:10000"/>
        <dbReference type="Rhea" id="RHEA-COMP:10001"/>
        <dbReference type="ChEBI" id="CHEBI:15377"/>
        <dbReference type="ChEBI" id="CHEBI:15378"/>
        <dbReference type="ChEBI" id="CHEBI:33737"/>
        <dbReference type="ChEBI" id="CHEBI:33738"/>
        <dbReference type="ChEBI" id="CHEBI:57623"/>
        <dbReference type="ChEBI" id="CHEBI:128753"/>
        <dbReference type="EC" id="1.17.7.4"/>
    </reaction>
</comment>
<comment type="cofactor">
    <cofactor evidence="1">
        <name>[4Fe-4S] cluster</name>
        <dbReference type="ChEBI" id="CHEBI:49883"/>
    </cofactor>
    <text evidence="1">Binds 1 [4Fe-4S] cluster per subunit.</text>
</comment>
<comment type="pathway">
    <text evidence="1">Isoprenoid biosynthesis; dimethylallyl diphosphate biosynthesis; dimethylallyl diphosphate from (2E)-4-hydroxy-3-methylbutenyl diphosphate: step 1/1.</text>
</comment>
<comment type="pathway">
    <text evidence="1">Isoprenoid biosynthesis; isopentenyl diphosphate biosynthesis via DXP pathway; isopentenyl diphosphate from 1-deoxy-D-xylulose 5-phosphate: step 6/6.</text>
</comment>
<comment type="subunit">
    <text evidence="1">Homodimer.</text>
</comment>
<comment type="similarity">
    <text evidence="1">Belongs to the IspH family.</text>
</comment>
<comment type="sequence caution" evidence="2">
    <conflict type="erroneous initiation">
        <sequence resource="EMBL-CDS" id="AAM87245"/>
    </conflict>
</comment>
<comment type="sequence caution" evidence="2">
    <conflict type="erroneous initiation">
        <sequence resource="EMBL-CDS" id="AAS63850"/>
    </conflict>
</comment>
<organism>
    <name type="scientific">Yersinia pestis</name>
    <dbReference type="NCBI Taxonomy" id="632"/>
    <lineage>
        <taxon>Bacteria</taxon>
        <taxon>Pseudomonadati</taxon>
        <taxon>Pseudomonadota</taxon>
        <taxon>Gammaproteobacteria</taxon>
        <taxon>Enterobacterales</taxon>
        <taxon>Yersiniaceae</taxon>
        <taxon>Yersinia</taxon>
    </lineage>
</organism>
<protein>
    <recommendedName>
        <fullName evidence="1">4-hydroxy-3-methylbut-2-enyl diphosphate reductase</fullName>
        <shortName evidence="1">HMBPP reductase</shortName>
        <ecNumber evidence="1">1.17.7.4</ecNumber>
    </recommendedName>
</protein>
<keyword id="KW-0004">4Fe-4S</keyword>
<keyword id="KW-0408">Iron</keyword>
<keyword id="KW-0411">Iron-sulfur</keyword>
<keyword id="KW-0414">Isoprene biosynthesis</keyword>
<keyword id="KW-0479">Metal-binding</keyword>
<keyword id="KW-0560">Oxidoreductase</keyword>
<keyword id="KW-1185">Reference proteome</keyword>